<feature type="chain" id="PRO_0000454424" description="Nemertide alpha-2" evidence="2">
    <location>
        <begin position="1"/>
        <end position="31"/>
    </location>
</feature>
<feature type="modified residue" description="4-hydroxyproline" evidence="2">
    <location>
        <position position="28"/>
    </location>
</feature>
<feature type="modified residue" description="4-hydroxyproline" evidence="2">
    <location>
        <position position="29"/>
    </location>
</feature>
<feature type="disulfide bond" evidence="1">
    <location>
        <begin position="2"/>
        <end position="16"/>
    </location>
</feature>
<feature type="disulfide bond" evidence="1">
    <location>
        <begin position="9"/>
        <end position="20"/>
    </location>
</feature>
<feature type="disulfide bond" evidence="1">
    <location>
        <begin position="15"/>
        <end position="26"/>
    </location>
</feature>
<evidence type="ECO:0000250" key="1">
    <source>
        <dbReference type="UniProtKB" id="P0DM24"/>
    </source>
</evidence>
<evidence type="ECO:0000269" key="2">
    <source>
    </source>
</evidence>
<evidence type="ECO:0000269" key="3">
    <source>
    </source>
</evidence>
<evidence type="ECO:0000303" key="4">
    <source>
    </source>
</evidence>
<evidence type="ECO:0000305" key="5"/>
<evidence type="ECO:0000305" key="6">
    <source>
    </source>
</evidence>
<proteinExistence type="evidence at protein level"/>
<name>NEMA2_LINRU</name>
<comment type="function">
    <text evidence="1 3">Toxin with similar potency against both insect and mammalian sodium channels (Nav) (PubMed:34445875). Delays the inactivation of most Nav channels tested (B.germanica (BgNav1); EC(50)=87.2 nM, human Nav1.1/SCN1A; EC(50)=125.8 nM, rat Nav1.2/SCN2A; EC(50)=97.9 nM, rat Nav1.3/SCN3A; EC(50)=127.7 nM, rat Nav1.4/SCN4A; EC(50)=1150.3 nM, human Nav1.5/SCN5A; EC(50)=149.2 nM, mouse Nav1.6/SCN8A; EC(50)=1361.8 nM, human Nav1.9/SCN9A; EC(50)=1296.7 nM) (PubMed:34445875). Inactivation is completely prevented by a concentration of 1 uM, resulting in sustained, non-inactivating current (By similarity). In addition, the toxin significantly enhances the recovery from inactivation, and the open state is not required for the toxin to interact with the channel (By similarity). In vivo, injection into brine shrimp (Artemia salina) stops movement or causes death after 24 hours (EC(50)=2.9 uM) (PubMed:34445875).</text>
</comment>
<comment type="subcellular location">
    <subcellularLocation>
        <location evidence="6">Secreted</location>
    </subcellularLocation>
</comment>
<comment type="tissue specificity">
    <text evidence="2">Confined to the epidermis and to the mucus layer.</text>
</comment>
<comment type="domain">
    <text evidence="6">The presence of a 'disulfide through disulfide knot' structurally defines this protein as a knottin.</text>
</comment>
<comment type="mass spectrometry" mass="3260.738" method="MALDI" evidence="2"/>
<comment type="miscellaneous">
    <text evidence="3">Negative results: does not show effect on rat Nav1.8/SCN10A.</text>
</comment>
<comment type="similarity">
    <text evidence="5">Belongs to the nemertide family.</text>
</comment>
<reference key="1">
    <citation type="journal article" date="2018" name="Sci. Rep.">
        <title>Peptide ion channel toxins from the bootlace worm, the longest animal on Earth.</title>
        <authorList>
            <person name="Jacobsson E."/>
            <person name="Andersson H.S."/>
            <person name="Strand M."/>
            <person name="Peigneur S."/>
            <person name="Eriksson C."/>
            <person name="Loden H."/>
            <person name="Shariatgorji M."/>
            <person name="Andren P.E."/>
            <person name="Lebbe E.K.M."/>
            <person name="Rosengren K.J."/>
            <person name="Tytgat J."/>
            <person name="Goeransson U."/>
        </authorList>
    </citation>
    <scope>PROTEIN SEQUENCE</scope>
    <scope>MASS SPECTROMETRY</scope>
    <scope>HYDROXYLATION AT PRO-28 AND PRO-29</scope>
</reference>
<reference key="2">
    <citation type="journal article" date="2021" name="J. Nat. Prod.">
        <title>Functional characterization of the nemertide alpha family of peptide toxins.</title>
        <authorList>
            <person name="Jacobsson E."/>
            <person name="Peigneur S."/>
            <person name="Andersson H.S."/>
            <person name="Laborde Q."/>
            <person name="Strand M."/>
            <person name="Tytgat J."/>
            <person name="Goeransson U."/>
        </authorList>
    </citation>
    <scope>NUCLEOTIDE SEQUENCE [MRNA]</scope>
    <scope>SYNTHESIS</scope>
    <scope>FUNCTION</scope>
    <scope>BIOASSAY</scope>
</reference>
<keyword id="KW-0903">Direct protein sequencing</keyword>
<keyword id="KW-1015">Disulfide bond</keyword>
<keyword id="KW-0379">Hydroxylation</keyword>
<keyword id="KW-0872">Ion channel impairing toxin</keyword>
<keyword id="KW-0960">Knottin</keyword>
<keyword id="KW-0528">Neurotoxin</keyword>
<keyword id="KW-0964">Secreted</keyword>
<keyword id="KW-0800">Toxin</keyword>
<keyword id="KW-0738">Voltage-gated sodium channel impairing toxin</keyword>
<accession>P0DQS3</accession>
<dbReference type="SMR" id="P0DQS3"/>
<dbReference type="GO" id="GO:0005576">
    <property type="term" value="C:extracellular region"/>
    <property type="evidence" value="ECO:0007669"/>
    <property type="project" value="UniProtKB-SubCell"/>
</dbReference>
<dbReference type="GO" id="GO:0017080">
    <property type="term" value="F:sodium channel regulator activity"/>
    <property type="evidence" value="ECO:0007669"/>
    <property type="project" value="UniProtKB-KW"/>
</dbReference>
<dbReference type="GO" id="GO:0090729">
    <property type="term" value="F:toxin activity"/>
    <property type="evidence" value="ECO:0007669"/>
    <property type="project" value="UniProtKB-KW"/>
</dbReference>
<protein>
    <recommendedName>
        <fullName evidence="4">Nemertide alpha-2</fullName>
    </recommendedName>
</protein>
<organism>
    <name type="scientific">Lineus ruber</name>
    <name type="common">Red bootlace</name>
    <name type="synonym">Poseidon ruber</name>
    <dbReference type="NCBI Taxonomy" id="88926"/>
    <lineage>
        <taxon>Eukaryota</taxon>
        <taxon>Metazoa</taxon>
        <taxon>Spiralia</taxon>
        <taxon>Lophotrochozoa</taxon>
        <taxon>Nemertea</taxon>
        <taxon>Pilidiophora</taxon>
        <taxon>Heteronemertea</taxon>
        <taxon>Lineidae</taxon>
        <taxon>Lineus</taxon>
    </lineage>
</organism>
<sequence length="31" mass="3236">GCIATGSVCTLSKGCCTKNCGWNFKCNPPNQ</sequence>